<protein>
    <recommendedName>
        <fullName>Zinc finger CCCH-type with G patch domain-containing protein</fullName>
    </recommendedName>
</protein>
<sequence>MSVDELNQSILQYKEQLEQIAQALQLTRDETERSELNKLKSDLIELLELTVESLAATSDDDDAPDTAGRAPPATADNPIDDEFALFMREIKELQTEDSAAGEQAGEQTATEPERQPNDDDADNDDDADDKLDLDGLVGSKCSAPHLHTWGSTAYHNAMVCSLDADDLAHATAKVLFTNPTHREMLPCAYFLEGECRFTDEKCRYSHGEVVRLDQLRDYRAPQFERLRRAGSRALVKQSTRLWCKGTVTEVDFDAKRCKVRLEEGKREQLEVPFEDLLPLDEDEDGQEAAEDSESDTDGADEEEADDEALRKALLVEKSLFHPAPDRRLGEWEEHTRGIGSKIMQKMGYIVGTGLGREGEGIVVPVSAQVLPQGRSLDYCMELREQSNGDKDLFSVEKKLVQLKRQEAKRAAKDYERQRARESKSKDVFSFINEQVFSGAAGGESSRPNRNRPGALSRQELKEHSCKNLNIASLKLSEEIRRTEADVERLKIALTRHRAGTPAADNLLRQIDAKRAEISRMQASEGNISREQQLRSDKKKLTIF</sequence>
<reference key="1">
    <citation type="journal article" date="2002" name="Science">
        <title>The genome sequence of the malaria mosquito Anopheles gambiae.</title>
        <authorList>
            <person name="Holt R.A."/>
            <person name="Subramanian G.M."/>
            <person name="Halpern A."/>
            <person name="Sutton G.G."/>
            <person name="Charlab R."/>
            <person name="Nusskern D.R."/>
            <person name="Wincker P."/>
            <person name="Clark A.G."/>
            <person name="Ribeiro J.M.C."/>
            <person name="Wides R."/>
            <person name="Salzberg S.L."/>
            <person name="Loftus B.J."/>
            <person name="Yandell M.D."/>
            <person name="Majoros W.H."/>
            <person name="Rusch D.B."/>
            <person name="Lai Z."/>
            <person name="Kraft C.L."/>
            <person name="Abril J.F."/>
            <person name="Anthouard V."/>
            <person name="Arensburger P."/>
            <person name="Atkinson P.W."/>
            <person name="Baden H."/>
            <person name="de Berardinis V."/>
            <person name="Baldwin D."/>
            <person name="Benes V."/>
            <person name="Biedler J."/>
            <person name="Blass C."/>
            <person name="Bolanos R."/>
            <person name="Boscus D."/>
            <person name="Barnstead M."/>
            <person name="Cai S."/>
            <person name="Center A."/>
            <person name="Chaturverdi K."/>
            <person name="Christophides G.K."/>
            <person name="Chrystal M.A.M."/>
            <person name="Clamp M."/>
            <person name="Cravchik A."/>
            <person name="Curwen V."/>
            <person name="Dana A."/>
            <person name="Delcher A."/>
            <person name="Dew I."/>
            <person name="Evans C.A."/>
            <person name="Flanigan M."/>
            <person name="Grundschober-Freimoser A."/>
            <person name="Friedli L."/>
            <person name="Gu Z."/>
            <person name="Guan P."/>
            <person name="Guigo R."/>
            <person name="Hillenmeyer M.E."/>
            <person name="Hladun S.L."/>
            <person name="Hogan J.R."/>
            <person name="Hong Y.S."/>
            <person name="Hoover J."/>
            <person name="Jaillon O."/>
            <person name="Ke Z."/>
            <person name="Kodira C.D."/>
            <person name="Kokoza E."/>
            <person name="Koutsos A."/>
            <person name="Letunic I."/>
            <person name="Levitsky A.A."/>
            <person name="Liang Y."/>
            <person name="Lin J.-J."/>
            <person name="Lobo N.F."/>
            <person name="Lopez J.R."/>
            <person name="Malek J.A."/>
            <person name="McIntosh T.C."/>
            <person name="Meister S."/>
            <person name="Miller J.R."/>
            <person name="Mobarry C."/>
            <person name="Mongin E."/>
            <person name="Murphy S.D."/>
            <person name="O'Brochta D.A."/>
            <person name="Pfannkoch C."/>
            <person name="Qi R."/>
            <person name="Regier M.A."/>
            <person name="Remington K."/>
            <person name="Shao H."/>
            <person name="Sharakhova M.V."/>
            <person name="Sitter C.D."/>
            <person name="Shetty J."/>
            <person name="Smith T.J."/>
            <person name="Strong R."/>
            <person name="Sun J."/>
            <person name="Thomasova D."/>
            <person name="Ton L.Q."/>
            <person name="Topalis P."/>
            <person name="Tu Z.J."/>
            <person name="Unger M.F."/>
            <person name="Walenz B."/>
            <person name="Wang A.H."/>
            <person name="Wang J."/>
            <person name="Wang M."/>
            <person name="Wang X."/>
            <person name="Woodford K.J."/>
            <person name="Wortman J.R."/>
            <person name="Wu M."/>
            <person name="Yao A."/>
            <person name="Zdobnov E.M."/>
            <person name="Zhang H."/>
            <person name="Zhao Q."/>
            <person name="Zhao S."/>
            <person name="Zhu S.C."/>
            <person name="Zhimulev I."/>
            <person name="Coluzzi M."/>
            <person name="della Torre A."/>
            <person name="Roth C.W."/>
            <person name="Louis C."/>
            <person name="Kalush F."/>
            <person name="Mural R.J."/>
            <person name="Myers E.W."/>
            <person name="Adams M.D."/>
            <person name="Smith H.O."/>
            <person name="Broder S."/>
            <person name="Gardner M.J."/>
            <person name="Fraser C.M."/>
            <person name="Birney E."/>
            <person name="Bork P."/>
            <person name="Brey P.T."/>
            <person name="Venter J.C."/>
            <person name="Weissenbach J."/>
            <person name="Kafatos F.C."/>
            <person name="Collins F.H."/>
            <person name="Hoffman S.L."/>
        </authorList>
    </citation>
    <scope>NUCLEOTIDE SEQUENCE [LARGE SCALE GENOMIC DNA]</scope>
    <source>
        <strain>PEST</strain>
    </source>
</reference>
<proteinExistence type="inferred from homology"/>
<comment type="function">
    <text evidence="1">Transcription repressor.</text>
</comment>
<comment type="subcellular location">
    <subcellularLocation>
        <location evidence="1">Nucleus</location>
    </subcellularLocation>
</comment>
<feature type="chain" id="PRO_0000385199" description="Zinc finger CCCH-type with G patch domain-containing protein">
    <location>
        <begin position="1"/>
        <end position="543"/>
    </location>
</feature>
<feature type="domain" description="G-patch" evidence="2">
    <location>
        <begin position="335"/>
        <end position="381"/>
    </location>
</feature>
<feature type="zinc finger region" description="C3H1-type" evidence="3">
    <location>
        <begin position="186"/>
        <end position="209"/>
    </location>
</feature>
<feature type="region of interest" description="Disordered" evidence="4">
    <location>
        <begin position="55"/>
        <end position="79"/>
    </location>
</feature>
<feature type="region of interest" description="Disordered" evidence="4">
    <location>
        <begin position="95"/>
        <end position="132"/>
    </location>
</feature>
<feature type="region of interest" description="Disordered" evidence="4">
    <location>
        <begin position="272"/>
        <end position="304"/>
    </location>
</feature>
<feature type="region of interest" description="Disordered" evidence="4">
    <location>
        <begin position="438"/>
        <end position="460"/>
    </location>
</feature>
<feature type="compositionally biased region" description="Low complexity" evidence="4">
    <location>
        <begin position="65"/>
        <end position="76"/>
    </location>
</feature>
<feature type="compositionally biased region" description="Acidic residues" evidence="4">
    <location>
        <begin position="118"/>
        <end position="131"/>
    </location>
</feature>
<feature type="compositionally biased region" description="Acidic residues" evidence="4">
    <location>
        <begin position="277"/>
        <end position="304"/>
    </location>
</feature>
<organism>
    <name type="scientific">Anopheles gambiae</name>
    <name type="common">African malaria mosquito</name>
    <dbReference type="NCBI Taxonomy" id="7165"/>
    <lineage>
        <taxon>Eukaryota</taxon>
        <taxon>Metazoa</taxon>
        <taxon>Ecdysozoa</taxon>
        <taxon>Arthropoda</taxon>
        <taxon>Hexapoda</taxon>
        <taxon>Insecta</taxon>
        <taxon>Pterygota</taxon>
        <taxon>Neoptera</taxon>
        <taxon>Endopterygota</taxon>
        <taxon>Diptera</taxon>
        <taxon>Nematocera</taxon>
        <taxon>Culicoidea</taxon>
        <taxon>Culicidae</taxon>
        <taxon>Anophelinae</taxon>
        <taxon>Anopheles</taxon>
    </lineage>
</organism>
<accession>Q7PYU6</accession>
<name>ZGPAT_ANOGA</name>
<evidence type="ECO:0000250" key="1"/>
<evidence type="ECO:0000255" key="2">
    <source>
        <dbReference type="PROSITE-ProRule" id="PRU00092"/>
    </source>
</evidence>
<evidence type="ECO:0000255" key="3">
    <source>
        <dbReference type="PROSITE-ProRule" id="PRU00723"/>
    </source>
</evidence>
<evidence type="ECO:0000256" key="4">
    <source>
        <dbReference type="SAM" id="MobiDB-lite"/>
    </source>
</evidence>
<keyword id="KW-0238">DNA-binding</keyword>
<keyword id="KW-0479">Metal-binding</keyword>
<keyword id="KW-0539">Nucleus</keyword>
<keyword id="KW-1185">Reference proteome</keyword>
<keyword id="KW-0678">Repressor</keyword>
<keyword id="KW-0804">Transcription</keyword>
<keyword id="KW-0805">Transcription regulation</keyword>
<keyword id="KW-0862">Zinc</keyword>
<keyword id="KW-0863">Zinc-finger</keyword>
<gene>
    <name type="ORF">AGAP002111</name>
</gene>
<dbReference type="EMBL" id="AAAB01008987">
    <property type="protein sequence ID" value="EAA00977.4"/>
    <property type="molecule type" value="Genomic_DNA"/>
</dbReference>
<dbReference type="RefSeq" id="XP_320928.4">
    <property type="nucleotide sequence ID" value="XM_320928.4"/>
</dbReference>
<dbReference type="SMR" id="Q7PYU6"/>
<dbReference type="FunCoup" id="Q7PYU6">
    <property type="interactions" value="1384"/>
</dbReference>
<dbReference type="STRING" id="7165.Q7PYU6"/>
<dbReference type="PaxDb" id="7165-AGAP002111-PA"/>
<dbReference type="EnsemblMetazoa" id="AGAP002111-RA">
    <property type="protein sequence ID" value="AGAP002111-PA"/>
    <property type="gene ID" value="AGAP002111"/>
</dbReference>
<dbReference type="GeneID" id="1281359"/>
<dbReference type="KEGG" id="aga:1281359"/>
<dbReference type="VEuPathDB" id="VectorBase:AGAMI1_008666"/>
<dbReference type="VEuPathDB" id="VectorBase:AGAP002111"/>
<dbReference type="eggNOG" id="KOG2185">
    <property type="taxonomic scope" value="Eukaryota"/>
</dbReference>
<dbReference type="HOGENOM" id="CLU_040504_1_0_1"/>
<dbReference type="InParanoid" id="Q7PYU6"/>
<dbReference type="OMA" id="QYTRGIG"/>
<dbReference type="PhylomeDB" id="Q7PYU6"/>
<dbReference type="Proteomes" id="UP000007062">
    <property type="component" value="Chromosome 2R"/>
</dbReference>
<dbReference type="GO" id="GO:0005634">
    <property type="term" value="C:nucleus"/>
    <property type="evidence" value="ECO:0000318"/>
    <property type="project" value="GO_Central"/>
</dbReference>
<dbReference type="GO" id="GO:0001227">
    <property type="term" value="F:DNA-binding transcription repressor activity, RNA polymerase II-specific"/>
    <property type="evidence" value="ECO:0000318"/>
    <property type="project" value="GO_Central"/>
</dbReference>
<dbReference type="GO" id="GO:0000978">
    <property type="term" value="F:RNA polymerase II cis-regulatory region sequence-specific DNA binding"/>
    <property type="evidence" value="ECO:0000318"/>
    <property type="project" value="GO_Central"/>
</dbReference>
<dbReference type="GO" id="GO:0008270">
    <property type="term" value="F:zinc ion binding"/>
    <property type="evidence" value="ECO:0007669"/>
    <property type="project" value="UniProtKB-KW"/>
</dbReference>
<dbReference type="GO" id="GO:0000122">
    <property type="term" value="P:negative regulation of transcription by RNA polymerase II"/>
    <property type="evidence" value="ECO:0000318"/>
    <property type="project" value="GO_Central"/>
</dbReference>
<dbReference type="CDD" id="cd20384">
    <property type="entry name" value="Tudor_ZGPAT"/>
    <property type="match status" value="1"/>
</dbReference>
<dbReference type="Gene3D" id="2.30.30.1190">
    <property type="match status" value="1"/>
</dbReference>
<dbReference type="InterPro" id="IPR000467">
    <property type="entry name" value="G_patch_dom"/>
</dbReference>
<dbReference type="InterPro" id="IPR000571">
    <property type="entry name" value="Znf_CCCH"/>
</dbReference>
<dbReference type="PANTHER" id="PTHR46297">
    <property type="entry name" value="ZINC FINGER CCCH-TYPE WITH G PATCH DOMAIN-CONTAINING PROTEIN"/>
    <property type="match status" value="1"/>
</dbReference>
<dbReference type="PANTHER" id="PTHR46297:SF1">
    <property type="entry name" value="ZINC FINGER CCCH-TYPE WITH G PATCH DOMAIN-CONTAINING PROTEIN"/>
    <property type="match status" value="1"/>
</dbReference>
<dbReference type="Pfam" id="PF01585">
    <property type="entry name" value="G-patch"/>
    <property type="match status" value="1"/>
</dbReference>
<dbReference type="SMART" id="SM00443">
    <property type="entry name" value="G_patch"/>
    <property type="match status" value="1"/>
</dbReference>
<dbReference type="PROSITE" id="PS50174">
    <property type="entry name" value="G_PATCH"/>
    <property type="match status" value="1"/>
</dbReference>
<dbReference type="PROSITE" id="PS50103">
    <property type="entry name" value="ZF_C3H1"/>
    <property type="match status" value="1"/>
</dbReference>